<protein>
    <recommendedName>
        <fullName evidence="1">Ribosomal RNA small subunit methyltransferase H</fullName>
        <ecNumber evidence="1">2.1.1.199</ecNumber>
    </recommendedName>
    <alternativeName>
        <fullName evidence="1">16S rRNA m(4)C1402 methyltransferase</fullName>
    </alternativeName>
    <alternativeName>
        <fullName evidence="1">rRNA (cytosine-N(4)-)-methyltransferase RsmH</fullName>
    </alternativeName>
</protein>
<dbReference type="EC" id="2.1.1.199" evidence="1"/>
<dbReference type="EMBL" id="CP000551">
    <property type="protein sequence ID" value="ABM69477.1"/>
    <property type="molecule type" value="Genomic_DNA"/>
</dbReference>
<dbReference type="RefSeq" id="WP_011817664.1">
    <property type="nucleotide sequence ID" value="NC_008816.1"/>
</dbReference>
<dbReference type="SMR" id="A2BNW6"/>
<dbReference type="STRING" id="146891.A9601_01891"/>
<dbReference type="KEGG" id="pmb:A9601_01891"/>
<dbReference type="eggNOG" id="COG0275">
    <property type="taxonomic scope" value="Bacteria"/>
</dbReference>
<dbReference type="HOGENOM" id="CLU_038422_3_0_3"/>
<dbReference type="OrthoDB" id="9806637at2"/>
<dbReference type="Proteomes" id="UP000002590">
    <property type="component" value="Chromosome"/>
</dbReference>
<dbReference type="GO" id="GO:0005737">
    <property type="term" value="C:cytoplasm"/>
    <property type="evidence" value="ECO:0007669"/>
    <property type="project" value="UniProtKB-SubCell"/>
</dbReference>
<dbReference type="GO" id="GO:0071424">
    <property type="term" value="F:rRNA (cytosine-N4-)-methyltransferase activity"/>
    <property type="evidence" value="ECO:0007669"/>
    <property type="project" value="UniProtKB-UniRule"/>
</dbReference>
<dbReference type="GO" id="GO:0070475">
    <property type="term" value="P:rRNA base methylation"/>
    <property type="evidence" value="ECO:0007669"/>
    <property type="project" value="UniProtKB-UniRule"/>
</dbReference>
<dbReference type="CDD" id="cd02440">
    <property type="entry name" value="AdoMet_MTases"/>
    <property type="match status" value="1"/>
</dbReference>
<dbReference type="Gene3D" id="1.10.150.170">
    <property type="entry name" value="Putative methyltransferase TM0872, insert domain"/>
    <property type="match status" value="1"/>
</dbReference>
<dbReference type="Gene3D" id="3.40.50.150">
    <property type="entry name" value="Vaccinia Virus protein VP39"/>
    <property type="match status" value="1"/>
</dbReference>
<dbReference type="HAMAP" id="MF_01007">
    <property type="entry name" value="16SrRNA_methyltr_H"/>
    <property type="match status" value="1"/>
</dbReference>
<dbReference type="InterPro" id="IPR002903">
    <property type="entry name" value="RsmH"/>
</dbReference>
<dbReference type="InterPro" id="IPR023397">
    <property type="entry name" value="SAM-dep_MeTrfase_MraW_recog"/>
</dbReference>
<dbReference type="InterPro" id="IPR029063">
    <property type="entry name" value="SAM-dependent_MTases_sf"/>
</dbReference>
<dbReference type="NCBIfam" id="TIGR00006">
    <property type="entry name" value="16S rRNA (cytosine(1402)-N(4))-methyltransferase RsmH"/>
    <property type="match status" value="1"/>
</dbReference>
<dbReference type="PANTHER" id="PTHR11265:SF0">
    <property type="entry name" value="12S RRNA N4-METHYLCYTIDINE METHYLTRANSFERASE"/>
    <property type="match status" value="1"/>
</dbReference>
<dbReference type="PANTHER" id="PTHR11265">
    <property type="entry name" value="S-ADENOSYL-METHYLTRANSFERASE MRAW"/>
    <property type="match status" value="1"/>
</dbReference>
<dbReference type="Pfam" id="PF01795">
    <property type="entry name" value="Methyltransf_5"/>
    <property type="match status" value="1"/>
</dbReference>
<dbReference type="PIRSF" id="PIRSF004486">
    <property type="entry name" value="MraW"/>
    <property type="match status" value="1"/>
</dbReference>
<dbReference type="SUPFAM" id="SSF81799">
    <property type="entry name" value="Putative methyltransferase TM0872, insert domain"/>
    <property type="match status" value="1"/>
</dbReference>
<dbReference type="SUPFAM" id="SSF53335">
    <property type="entry name" value="S-adenosyl-L-methionine-dependent methyltransferases"/>
    <property type="match status" value="1"/>
</dbReference>
<evidence type="ECO:0000255" key="1">
    <source>
        <dbReference type="HAMAP-Rule" id="MF_01007"/>
    </source>
</evidence>
<proteinExistence type="inferred from homology"/>
<comment type="function">
    <text evidence="1">Specifically methylates the N4 position of cytidine in position 1402 (C1402) of 16S rRNA.</text>
</comment>
<comment type="catalytic activity">
    <reaction evidence="1">
        <text>cytidine(1402) in 16S rRNA + S-adenosyl-L-methionine = N(4)-methylcytidine(1402) in 16S rRNA + S-adenosyl-L-homocysteine + H(+)</text>
        <dbReference type="Rhea" id="RHEA:42928"/>
        <dbReference type="Rhea" id="RHEA-COMP:10286"/>
        <dbReference type="Rhea" id="RHEA-COMP:10287"/>
        <dbReference type="ChEBI" id="CHEBI:15378"/>
        <dbReference type="ChEBI" id="CHEBI:57856"/>
        <dbReference type="ChEBI" id="CHEBI:59789"/>
        <dbReference type="ChEBI" id="CHEBI:74506"/>
        <dbReference type="ChEBI" id="CHEBI:82748"/>
        <dbReference type="EC" id="2.1.1.199"/>
    </reaction>
</comment>
<comment type="subcellular location">
    <subcellularLocation>
        <location evidence="1">Cytoplasm</location>
    </subcellularLocation>
</comment>
<comment type="similarity">
    <text evidence="1">Belongs to the methyltransferase superfamily. RsmH family.</text>
</comment>
<reference key="1">
    <citation type="journal article" date="2007" name="PLoS Genet.">
        <title>Patterns and implications of gene gain and loss in the evolution of Prochlorococcus.</title>
        <authorList>
            <person name="Kettler G.C."/>
            <person name="Martiny A.C."/>
            <person name="Huang K."/>
            <person name="Zucker J."/>
            <person name="Coleman M.L."/>
            <person name="Rodrigue S."/>
            <person name="Chen F."/>
            <person name="Lapidus A."/>
            <person name="Ferriera S."/>
            <person name="Johnson J."/>
            <person name="Steglich C."/>
            <person name="Church G.M."/>
            <person name="Richardson P."/>
            <person name="Chisholm S.W."/>
        </authorList>
    </citation>
    <scope>NUCLEOTIDE SEQUENCE [LARGE SCALE GENOMIC DNA]</scope>
    <source>
        <strain>AS9601</strain>
    </source>
</reference>
<name>RSMH_PROMS</name>
<keyword id="KW-0963">Cytoplasm</keyword>
<keyword id="KW-0489">Methyltransferase</keyword>
<keyword id="KW-0698">rRNA processing</keyword>
<keyword id="KW-0949">S-adenosyl-L-methionine</keyword>
<keyword id="KW-0808">Transferase</keyword>
<feature type="chain" id="PRO_0000387038" description="Ribosomal RNA small subunit methyltransferase H">
    <location>
        <begin position="1"/>
        <end position="300"/>
    </location>
</feature>
<feature type="binding site" evidence="1">
    <location>
        <begin position="46"/>
        <end position="48"/>
    </location>
    <ligand>
        <name>S-adenosyl-L-methionine</name>
        <dbReference type="ChEBI" id="CHEBI:59789"/>
    </ligand>
</feature>
<feature type="binding site" evidence="1">
    <location>
        <position position="65"/>
    </location>
    <ligand>
        <name>S-adenosyl-L-methionine</name>
        <dbReference type="ChEBI" id="CHEBI:59789"/>
    </ligand>
</feature>
<feature type="binding site" evidence="1">
    <location>
        <position position="92"/>
    </location>
    <ligand>
        <name>S-adenosyl-L-methionine</name>
        <dbReference type="ChEBI" id="CHEBI:59789"/>
    </ligand>
</feature>
<feature type="binding site" evidence="1">
    <location>
        <position position="107"/>
    </location>
    <ligand>
        <name>S-adenosyl-L-methionine</name>
        <dbReference type="ChEBI" id="CHEBI:59789"/>
    </ligand>
</feature>
<feature type="binding site" evidence="1">
    <location>
        <position position="114"/>
    </location>
    <ligand>
        <name>S-adenosyl-L-methionine</name>
        <dbReference type="ChEBI" id="CHEBI:59789"/>
    </ligand>
</feature>
<organism>
    <name type="scientific">Prochlorococcus marinus (strain AS9601)</name>
    <dbReference type="NCBI Taxonomy" id="146891"/>
    <lineage>
        <taxon>Bacteria</taxon>
        <taxon>Bacillati</taxon>
        <taxon>Cyanobacteriota</taxon>
        <taxon>Cyanophyceae</taxon>
        <taxon>Synechococcales</taxon>
        <taxon>Prochlorococcaceae</taxon>
        <taxon>Prochlorococcus</taxon>
    </lineage>
</organism>
<sequence>MQTDLSDSSFFNHQSVMTDEIMASLEHYPLIHNNQLKGIDATLGGGGHSYHLLRKYSDLNIIGLDQDPFARKSASKKLDEFKNRIDIRASNFADFVPKEKVSFVIADLGVNSNQIDDPKRGFSFQKDGPLDMRMNPFLDVDADKLIEALNEKDLANLIYKYGEERLSRKIARKIKLDLKENGKYSGTKELAYSIAGCFPPKQRYKKIHPATRTFQALRIAVNKEIEVLEKFLQVVPEWLLPGGIISIISFHSLEDRLVKSCFKNDQRLKNLTKKPITPSEQEIELNKRARSGKLRIAQLN</sequence>
<accession>A2BNW6</accession>
<gene>
    <name evidence="1" type="primary">rsmH</name>
    <name type="synonym">mraW</name>
    <name type="ordered locus">A9601_01891</name>
</gene>